<evidence type="ECO:0000305" key="1"/>
<sequence length="38" mass="4553">MMMFITVYDINQKQKKRYGLRGCNLNLKATVLLLHKRI</sequence>
<proteinExistence type="inferred from homology"/>
<feature type="chain" id="PRO_0000373739" description="Uncharacterized protein C84L">
    <location>
        <begin position="1"/>
        <end position="38"/>
    </location>
</feature>
<accession>Q65155</accession>
<organismHost>
    <name type="scientific">Ornithodoros</name>
    <name type="common">relapsing fever ticks</name>
    <dbReference type="NCBI Taxonomy" id="6937"/>
</organismHost>
<organismHost>
    <name type="scientific">Sus scrofa</name>
    <name type="common">Pig</name>
    <dbReference type="NCBI Taxonomy" id="9823"/>
</organismHost>
<comment type="similarity">
    <text evidence="1">Belongs to the asfivirus C84L family.</text>
</comment>
<comment type="sequence caution" evidence="1">
    <conflict type="erroneous initiation">
        <sequence resource="EMBL-CDS" id="AAA65293"/>
    </conflict>
    <text>Truncated N-terminus.</text>
</comment>
<dbReference type="EMBL" id="U18466">
    <property type="protein sequence ID" value="AAA65293.1"/>
    <property type="status" value="ALT_INIT"/>
    <property type="molecule type" value="Genomic_DNA"/>
</dbReference>
<dbReference type="RefSeq" id="NP_042757.1">
    <property type="nucleotide sequence ID" value="NC_001659.2"/>
</dbReference>
<dbReference type="GeneID" id="22220293"/>
<dbReference type="KEGG" id="vg:22220293"/>
<dbReference type="Proteomes" id="UP000000624">
    <property type="component" value="Segment"/>
</dbReference>
<reference key="1">
    <citation type="journal article" date="1995" name="Virology">
        <title>Analysis of the complete nucleotide sequence of African swine fever virus.</title>
        <authorList>
            <person name="Yanez R.J."/>
            <person name="Rodriguez J.M."/>
            <person name="Nogal M.L."/>
            <person name="Yuste L."/>
            <person name="Enriquez C."/>
            <person name="Rodriguez J.F."/>
            <person name="Vinuela E."/>
        </authorList>
    </citation>
    <scope>NUCLEOTIDE SEQUENCE [LARGE SCALE GENOMIC DNA]</scope>
</reference>
<reference key="2">
    <citation type="journal article" date="2020" name="J. Virol.">
        <title>The African Swine Fever Virus Transcriptome.</title>
        <authorList>
            <person name="Cackett G."/>
            <person name="Matelska D."/>
            <person name="Sykora M."/>
            <person name="Portugal R."/>
            <person name="Malecki M."/>
            <person name="Baehler J."/>
            <person name="Dixon L."/>
            <person name="Werner F."/>
        </authorList>
    </citation>
    <scope>N-TERMINUS REVISION</scope>
</reference>
<gene>
    <name type="ordered locus">Ba71V-063</name>
    <name type="ORF">C84L</name>
</gene>
<protein>
    <recommendedName>
        <fullName>Uncharacterized protein C84L</fullName>
        <shortName>pC84L</shortName>
    </recommendedName>
</protein>
<organism>
    <name type="scientific">African swine fever virus (strain Badajoz 1971 Vero-adapted)</name>
    <name type="common">Ba71V</name>
    <name type="synonym">ASFV</name>
    <dbReference type="NCBI Taxonomy" id="10498"/>
    <lineage>
        <taxon>Viruses</taxon>
        <taxon>Varidnaviria</taxon>
        <taxon>Bamfordvirae</taxon>
        <taxon>Nucleocytoviricota</taxon>
        <taxon>Pokkesviricetes</taxon>
        <taxon>Asfuvirales</taxon>
        <taxon>Asfarviridae</taxon>
        <taxon>Asfivirus</taxon>
        <taxon>African swine fever virus</taxon>
    </lineage>
</organism>
<name>VF84L_ASFB7</name>
<keyword id="KW-1185">Reference proteome</keyword>